<proteinExistence type="inferred from homology"/>
<comment type="function">
    <text evidence="1">Catalyzes the interconversion of L-alanine and D-alanine. May also act on other amino acids.</text>
</comment>
<comment type="catalytic activity">
    <reaction evidence="1">
        <text>L-alanine = D-alanine</text>
        <dbReference type="Rhea" id="RHEA:20249"/>
        <dbReference type="ChEBI" id="CHEBI:57416"/>
        <dbReference type="ChEBI" id="CHEBI:57972"/>
        <dbReference type="EC" id="5.1.1.1"/>
    </reaction>
</comment>
<comment type="cofactor">
    <cofactor evidence="1">
        <name>pyridoxal 5'-phosphate</name>
        <dbReference type="ChEBI" id="CHEBI:597326"/>
    </cofactor>
</comment>
<comment type="pathway">
    <text evidence="1">Amino-acid biosynthesis; D-alanine biosynthesis; D-alanine from L-alanine: step 1/1.</text>
</comment>
<comment type="similarity">
    <text evidence="1">Belongs to the alanine racemase family.</text>
</comment>
<evidence type="ECO:0000255" key="1">
    <source>
        <dbReference type="HAMAP-Rule" id="MF_01201"/>
    </source>
</evidence>
<accession>A9ND48</accession>
<protein>
    <recommendedName>
        <fullName evidence="1">Alanine racemase</fullName>
        <ecNumber evidence="1">5.1.1.1</ecNumber>
    </recommendedName>
</protein>
<keyword id="KW-0413">Isomerase</keyword>
<keyword id="KW-0663">Pyridoxal phosphate</keyword>
<name>ALR_COXBR</name>
<reference key="1">
    <citation type="submission" date="2007-11" db="EMBL/GenBank/DDBJ databases">
        <title>Genome sequencing of phylogenetically and phenotypically diverse Coxiella burnetii isolates.</title>
        <authorList>
            <person name="Seshadri R."/>
            <person name="Samuel J.E."/>
        </authorList>
    </citation>
    <scope>NUCLEOTIDE SEQUENCE [LARGE SCALE GENOMIC DNA]</scope>
    <source>
        <strain>RSA 331 / Henzerling II</strain>
    </source>
</reference>
<organism>
    <name type="scientific">Coxiella burnetii (strain RSA 331 / Henzerling II)</name>
    <dbReference type="NCBI Taxonomy" id="360115"/>
    <lineage>
        <taxon>Bacteria</taxon>
        <taxon>Pseudomonadati</taxon>
        <taxon>Pseudomonadota</taxon>
        <taxon>Gammaproteobacteria</taxon>
        <taxon>Legionellales</taxon>
        <taxon>Coxiellaceae</taxon>
        <taxon>Coxiella</taxon>
    </lineage>
</organism>
<gene>
    <name type="primary">alr</name>
    <name type="ordered locus">COXBURSA331_A1082</name>
</gene>
<dbReference type="EC" id="5.1.1.1" evidence="1"/>
<dbReference type="EMBL" id="CP000890">
    <property type="protein sequence ID" value="ABX77460.1"/>
    <property type="molecule type" value="Genomic_DNA"/>
</dbReference>
<dbReference type="RefSeq" id="WP_012220437.1">
    <property type="nucleotide sequence ID" value="NC_010117.1"/>
</dbReference>
<dbReference type="SMR" id="A9ND48"/>
<dbReference type="KEGG" id="cbs:COXBURSA331_A1082"/>
<dbReference type="HOGENOM" id="CLU_028393_1_0_6"/>
<dbReference type="UniPathway" id="UPA00042">
    <property type="reaction ID" value="UER00497"/>
</dbReference>
<dbReference type="GO" id="GO:0005829">
    <property type="term" value="C:cytosol"/>
    <property type="evidence" value="ECO:0007669"/>
    <property type="project" value="TreeGrafter"/>
</dbReference>
<dbReference type="GO" id="GO:0008784">
    <property type="term" value="F:alanine racemase activity"/>
    <property type="evidence" value="ECO:0007669"/>
    <property type="project" value="UniProtKB-UniRule"/>
</dbReference>
<dbReference type="GO" id="GO:0030170">
    <property type="term" value="F:pyridoxal phosphate binding"/>
    <property type="evidence" value="ECO:0007669"/>
    <property type="project" value="UniProtKB-UniRule"/>
</dbReference>
<dbReference type="GO" id="GO:0030632">
    <property type="term" value="P:D-alanine biosynthetic process"/>
    <property type="evidence" value="ECO:0007669"/>
    <property type="project" value="UniProtKB-UniRule"/>
</dbReference>
<dbReference type="CDD" id="cd06827">
    <property type="entry name" value="PLPDE_III_AR_proteobact"/>
    <property type="match status" value="1"/>
</dbReference>
<dbReference type="FunFam" id="2.40.37.10:FF:000002">
    <property type="entry name" value="Alanine racemase"/>
    <property type="match status" value="1"/>
</dbReference>
<dbReference type="FunFam" id="3.20.20.10:FF:000044">
    <property type="entry name" value="Alanine racemase"/>
    <property type="match status" value="1"/>
</dbReference>
<dbReference type="Gene3D" id="3.20.20.10">
    <property type="entry name" value="Alanine racemase"/>
    <property type="match status" value="1"/>
</dbReference>
<dbReference type="Gene3D" id="2.40.37.10">
    <property type="entry name" value="Lyase, Ornithine Decarboxylase, Chain A, domain 1"/>
    <property type="match status" value="1"/>
</dbReference>
<dbReference type="HAMAP" id="MF_01201">
    <property type="entry name" value="Ala_racemase"/>
    <property type="match status" value="1"/>
</dbReference>
<dbReference type="InterPro" id="IPR000821">
    <property type="entry name" value="Ala_racemase"/>
</dbReference>
<dbReference type="InterPro" id="IPR009006">
    <property type="entry name" value="Ala_racemase/Decarboxylase_C"/>
</dbReference>
<dbReference type="InterPro" id="IPR011079">
    <property type="entry name" value="Ala_racemase_C"/>
</dbReference>
<dbReference type="InterPro" id="IPR001608">
    <property type="entry name" value="Ala_racemase_N"/>
</dbReference>
<dbReference type="InterPro" id="IPR029066">
    <property type="entry name" value="PLP-binding_barrel"/>
</dbReference>
<dbReference type="NCBIfam" id="TIGR00492">
    <property type="entry name" value="alr"/>
    <property type="match status" value="1"/>
</dbReference>
<dbReference type="PANTHER" id="PTHR30511">
    <property type="entry name" value="ALANINE RACEMASE"/>
    <property type="match status" value="1"/>
</dbReference>
<dbReference type="PANTHER" id="PTHR30511:SF4">
    <property type="entry name" value="ALANINE RACEMASE, BIOSYNTHETIC"/>
    <property type="match status" value="1"/>
</dbReference>
<dbReference type="Pfam" id="PF00842">
    <property type="entry name" value="Ala_racemase_C"/>
    <property type="match status" value="1"/>
</dbReference>
<dbReference type="Pfam" id="PF01168">
    <property type="entry name" value="Ala_racemase_N"/>
    <property type="match status" value="1"/>
</dbReference>
<dbReference type="PRINTS" id="PR00992">
    <property type="entry name" value="ALARACEMASE"/>
</dbReference>
<dbReference type="SMART" id="SM01005">
    <property type="entry name" value="Ala_racemase_C"/>
    <property type="match status" value="1"/>
</dbReference>
<dbReference type="SUPFAM" id="SSF50621">
    <property type="entry name" value="Alanine racemase C-terminal domain-like"/>
    <property type="match status" value="1"/>
</dbReference>
<dbReference type="SUPFAM" id="SSF51419">
    <property type="entry name" value="PLP-binding barrel"/>
    <property type="match status" value="1"/>
</dbReference>
<feature type="chain" id="PRO_1000085501" description="Alanine racemase">
    <location>
        <begin position="1"/>
        <end position="364"/>
    </location>
</feature>
<feature type="active site" description="Proton acceptor; specific for D-alanine" evidence="1">
    <location>
        <position position="34"/>
    </location>
</feature>
<feature type="active site" description="Proton acceptor; specific for L-alanine" evidence="1">
    <location>
        <position position="259"/>
    </location>
</feature>
<feature type="binding site" evidence="1">
    <location>
        <position position="129"/>
    </location>
    <ligand>
        <name>substrate</name>
    </ligand>
</feature>
<feature type="binding site" evidence="1">
    <location>
        <position position="307"/>
    </location>
    <ligand>
        <name>substrate</name>
    </ligand>
</feature>
<feature type="modified residue" description="N6-(pyridoxal phosphate)lysine" evidence="1">
    <location>
        <position position="34"/>
    </location>
</feature>
<sequence length="364" mass="39952">MNRATATINVTALKHNLSQIKALAPKSLAWAMIKSNGYGHGLVRVAKALSDANAFGVACIDEALTLREVGIKSPIIVMKGFYNEAELSQFARHRLGAVIHCSDQVSLLEKTNLTSSLSVWLKIDTGMNRLGFSVEQSPAVYNQLKTSSSIQKPIGLMTHLADADNENKTFTELQIKRFFSVTEKMIGPKSIVNSAGFFAYPNALVDWIRPGIILYGISPFGINYNSFKEKIEKKFRPVMTLSAKIIAIKNRRQNDSVGYGCTWSCSEDMPIAIVSIGYGDGYPRHAPSGTPVLLNGKICPLIGRVSMDMIAIDLRSQPNAQVGDDVILWGEGLPVEIIAEKAGTIAYELLCKITQRVQFIEIEK</sequence>